<reference key="1">
    <citation type="journal article" date="2000" name="Nature">
        <title>Sequence and analysis of chromosome 1 of the plant Arabidopsis thaliana.</title>
        <authorList>
            <person name="Theologis A."/>
            <person name="Ecker J.R."/>
            <person name="Palm C.J."/>
            <person name="Federspiel N.A."/>
            <person name="Kaul S."/>
            <person name="White O."/>
            <person name="Alonso J."/>
            <person name="Altafi H."/>
            <person name="Araujo R."/>
            <person name="Bowman C.L."/>
            <person name="Brooks S.Y."/>
            <person name="Buehler E."/>
            <person name="Chan A."/>
            <person name="Chao Q."/>
            <person name="Chen H."/>
            <person name="Cheuk R.F."/>
            <person name="Chin C.W."/>
            <person name="Chung M.K."/>
            <person name="Conn L."/>
            <person name="Conway A.B."/>
            <person name="Conway A.R."/>
            <person name="Creasy T.H."/>
            <person name="Dewar K."/>
            <person name="Dunn P."/>
            <person name="Etgu P."/>
            <person name="Feldblyum T.V."/>
            <person name="Feng J.-D."/>
            <person name="Fong B."/>
            <person name="Fujii C.Y."/>
            <person name="Gill J.E."/>
            <person name="Goldsmith A.D."/>
            <person name="Haas B."/>
            <person name="Hansen N.F."/>
            <person name="Hughes B."/>
            <person name="Huizar L."/>
            <person name="Hunter J.L."/>
            <person name="Jenkins J."/>
            <person name="Johnson-Hopson C."/>
            <person name="Khan S."/>
            <person name="Khaykin E."/>
            <person name="Kim C.J."/>
            <person name="Koo H.L."/>
            <person name="Kremenetskaia I."/>
            <person name="Kurtz D.B."/>
            <person name="Kwan A."/>
            <person name="Lam B."/>
            <person name="Langin-Hooper S."/>
            <person name="Lee A."/>
            <person name="Lee J.M."/>
            <person name="Lenz C.A."/>
            <person name="Li J.H."/>
            <person name="Li Y.-P."/>
            <person name="Lin X."/>
            <person name="Liu S.X."/>
            <person name="Liu Z.A."/>
            <person name="Luros J.S."/>
            <person name="Maiti R."/>
            <person name="Marziali A."/>
            <person name="Militscher J."/>
            <person name="Miranda M."/>
            <person name="Nguyen M."/>
            <person name="Nierman W.C."/>
            <person name="Osborne B.I."/>
            <person name="Pai G."/>
            <person name="Peterson J."/>
            <person name="Pham P.K."/>
            <person name="Rizzo M."/>
            <person name="Rooney T."/>
            <person name="Rowley D."/>
            <person name="Sakano H."/>
            <person name="Salzberg S.L."/>
            <person name="Schwartz J.R."/>
            <person name="Shinn P."/>
            <person name="Southwick A.M."/>
            <person name="Sun H."/>
            <person name="Tallon L.J."/>
            <person name="Tambunga G."/>
            <person name="Toriumi M.J."/>
            <person name="Town C.D."/>
            <person name="Utterback T."/>
            <person name="Van Aken S."/>
            <person name="Vaysberg M."/>
            <person name="Vysotskaia V.S."/>
            <person name="Walker M."/>
            <person name="Wu D."/>
            <person name="Yu G."/>
            <person name="Fraser C.M."/>
            <person name="Venter J.C."/>
            <person name="Davis R.W."/>
        </authorList>
    </citation>
    <scope>NUCLEOTIDE SEQUENCE [LARGE SCALE GENOMIC DNA]</scope>
    <source>
        <strain>cv. Columbia</strain>
    </source>
</reference>
<reference key="2">
    <citation type="journal article" date="2017" name="Plant J.">
        <title>Araport11: a complete reannotation of the Arabidopsis thaliana reference genome.</title>
        <authorList>
            <person name="Cheng C.Y."/>
            <person name="Krishnakumar V."/>
            <person name="Chan A.P."/>
            <person name="Thibaud-Nissen F."/>
            <person name="Schobel S."/>
            <person name="Town C.D."/>
        </authorList>
    </citation>
    <scope>GENOME REANNOTATION</scope>
    <source>
        <strain>cv. Columbia</strain>
    </source>
</reference>
<reference key="3">
    <citation type="journal article" date="2002" name="In Silico Biol.">
        <title>Peptomics, identification of novel cationic Arabidopsis peptides with conserved sequence motifs.</title>
        <authorList>
            <person name="Olsen A.N."/>
            <person name="Mundy J."/>
            <person name="Skriver K."/>
        </authorList>
    </citation>
    <scope>GENE FAMILY</scope>
    <scope>NOMENCLATURE</scope>
</reference>
<sequence length="81" mass="9093">MSARKKNRIHVFFVSIMIIISLVSGFGEGIKQINYKDLIKDTIPGCTSKNPKECVKVPANTYHRGCEISTRCHREQHSSSG</sequence>
<dbReference type="EMBL" id="AC079675">
    <property type="status" value="NOT_ANNOTATED_CDS"/>
    <property type="molecule type" value="Genomic_DNA"/>
</dbReference>
<dbReference type="EMBL" id="CP002684">
    <property type="protein sequence ID" value="AEE33736.1"/>
    <property type="molecule type" value="Genomic_DNA"/>
</dbReference>
<dbReference type="RefSeq" id="NP_001077746.1">
    <property type="nucleotide sequence ID" value="NM_001084277.1"/>
</dbReference>
<dbReference type="SMR" id="A8MRD4"/>
<dbReference type="STRING" id="3702.A8MRD4"/>
<dbReference type="PaxDb" id="3702-AT1G60815.1"/>
<dbReference type="EnsemblPlants" id="AT1G60815.1">
    <property type="protein sequence ID" value="AT1G60815.1"/>
    <property type="gene ID" value="AT1G60815"/>
</dbReference>
<dbReference type="GeneID" id="5007822"/>
<dbReference type="Gramene" id="AT1G60815.1">
    <property type="protein sequence ID" value="AT1G60815.1"/>
    <property type="gene ID" value="AT1G60815"/>
</dbReference>
<dbReference type="KEGG" id="ath:AT1G60815"/>
<dbReference type="Araport" id="AT1G60815"/>
<dbReference type="TAIR" id="AT1G60815">
    <property type="gene designation" value="RALFL7"/>
</dbReference>
<dbReference type="HOGENOM" id="CLU_184731_0_0_1"/>
<dbReference type="InParanoid" id="A8MRD4"/>
<dbReference type="PhylomeDB" id="A8MRD4"/>
<dbReference type="PRO" id="PR:A8MRD4"/>
<dbReference type="Proteomes" id="UP000006548">
    <property type="component" value="Chromosome 1"/>
</dbReference>
<dbReference type="ExpressionAtlas" id="A8MRD4">
    <property type="expression patterns" value="baseline"/>
</dbReference>
<dbReference type="GO" id="GO:0048046">
    <property type="term" value="C:apoplast"/>
    <property type="evidence" value="ECO:0000250"/>
    <property type="project" value="TAIR"/>
</dbReference>
<dbReference type="GO" id="GO:0005179">
    <property type="term" value="F:hormone activity"/>
    <property type="evidence" value="ECO:0000250"/>
    <property type="project" value="UniProtKB"/>
</dbReference>
<dbReference type="GO" id="GO:0019722">
    <property type="term" value="P:calcium-mediated signaling"/>
    <property type="evidence" value="ECO:0000250"/>
    <property type="project" value="UniProtKB"/>
</dbReference>
<dbReference type="GO" id="GO:0007267">
    <property type="term" value="P:cell-cell signaling"/>
    <property type="evidence" value="ECO:0000250"/>
    <property type="project" value="TAIR"/>
</dbReference>
<dbReference type="GO" id="GO:0040008">
    <property type="term" value="P:regulation of growth"/>
    <property type="evidence" value="ECO:0007669"/>
    <property type="project" value="UniProtKB-ARBA"/>
</dbReference>
<dbReference type="InterPro" id="IPR008801">
    <property type="entry name" value="RALF"/>
</dbReference>
<dbReference type="PANTHER" id="PTHR34270">
    <property type="entry name" value="PROTEIN RALF-LIKE 15-RELATED"/>
    <property type="match status" value="1"/>
</dbReference>
<dbReference type="PANTHER" id="PTHR34270:SF3">
    <property type="entry name" value="PROTEIN RALF-LIKE 16-RELATED"/>
    <property type="match status" value="1"/>
</dbReference>
<dbReference type="Pfam" id="PF05498">
    <property type="entry name" value="RALF"/>
    <property type="match status" value="1"/>
</dbReference>
<name>RLF7_ARATH</name>
<proteinExistence type="inferred from homology"/>
<accession>A8MRD4</accession>
<protein>
    <recommendedName>
        <fullName>Protein RALF-like 7</fullName>
    </recommendedName>
</protein>
<comment type="function">
    <text evidence="1">Cell signaling peptide that may regulate plant stress, growth, and development. Mediates a rapid alkalinization of extracellular space by mediating a transient increase in the cytoplasmic Ca(2+) concentration leading to a calcium-dependent signaling events through a cell surface receptor and a concomitant activation of some intracellular mitogen-activated protein kinases (By similarity).</text>
</comment>
<comment type="subcellular location">
    <subcellularLocation>
        <location evidence="1">Secreted</location>
    </subcellularLocation>
</comment>
<comment type="similarity">
    <text evidence="3">Belongs to the plant rapid alkalinization factor (RALF) family.</text>
</comment>
<feature type="signal peptide" evidence="2">
    <location>
        <begin position="1"/>
        <end position="29"/>
    </location>
</feature>
<feature type="chain" id="PRO_0000420298" description="Protein RALF-like 7">
    <location>
        <begin position="30"/>
        <end position="81"/>
    </location>
</feature>
<feature type="disulfide bond" evidence="1">
    <location>
        <begin position="46"/>
        <end position="54"/>
    </location>
</feature>
<feature type="disulfide bond" evidence="1">
    <location>
        <begin position="66"/>
        <end position="72"/>
    </location>
</feature>
<evidence type="ECO:0000250" key="1"/>
<evidence type="ECO:0000255" key="2"/>
<evidence type="ECO:0000305" key="3"/>
<keyword id="KW-1015">Disulfide bond</keyword>
<keyword id="KW-0372">Hormone</keyword>
<keyword id="KW-1185">Reference proteome</keyword>
<keyword id="KW-0964">Secreted</keyword>
<keyword id="KW-0732">Signal</keyword>
<gene>
    <name type="primary">RALFL7</name>
    <name type="ordered locus">At1g60815</name>
    <name type="ORF">F23C21</name>
</gene>
<organism>
    <name type="scientific">Arabidopsis thaliana</name>
    <name type="common">Mouse-ear cress</name>
    <dbReference type="NCBI Taxonomy" id="3702"/>
    <lineage>
        <taxon>Eukaryota</taxon>
        <taxon>Viridiplantae</taxon>
        <taxon>Streptophyta</taxon>
        <taxon>Embryophyta</taxon>
        <taxon>Tracheophyta</taxon>
        <taxon>Spermatophyta</taxon>
        <taxon>Magnoliopsida</taxon>
        <taxon>eudicotyledons</taxon>
        <taxon>Gunneridae</taxon>
        <taxon>Pentapetalae</taxon>
        <taxon>rosids</taxon>
        <taxon>malvids</taxon>
        <taxon>Brassicales</taxon>
        <taxon>Brassicaceae</taxon>
        <taxon>Camelineae</taxon>
        <taxon>Arabidopsis</taxon>
    </lineage>
</organism>